<sequence length="414" mass="46161">MTSAVGISVPNTDAQSSQSASQTTVEQEVLKSKVNLLGMSRIELEQFFEQIGEKKFRAGQIMKWIHQYFVTDLAEMTNISGKLRTKLEQVCEIKAPEVVHRHYSKDGTRKWVFRVGEGSGSLVETVLIPAEDKTGSRKTLCISSQVGCALDCSFCSTGKQGFQRDLTPAEIIGQLWVANQSYVEDVPVAERTRAVTNVVMMGMGEPLLNFKPVVHSMSIMLDDYAYGMSKRRVTLSTSGVVPMIDKLAEELDVALAISLHAPNNPLRDELVPINKKYPLEQLIAAAQRYITKDGNESARKHVTIEYVMLDGVNDHPEHAQQLVKLLKNLPSKINLIPFNPFPHAPYGRSSRNRIMAFQKTLSDAGFVCTIRQTRGDDIDAACGQLVGQVADRTRRAEQWKKKVAERQEIIRSQG</sequence>
<protein>
    <recommendedName>
        <fullName evidence="1">Dual-specificity RNA methyltransferase RlmN</fullName>
        <ecNumber evidence="1">2.1.1.192</ecNumber>
    </recommendedName>
    <alternativeName>
        <fullName evidence="1">23S rRNA (adenine(2503)-C(2))-methyltransferase</fullName>
    </alternativeName>
    <alternativeName>
        <fullName evidence="1">23S rRNA m2A2503 methyltransferase</fullName>
    </alternativeName>
    <alternativeName>
        <fullName evidence="1">Ribosomal RNA large subunit methyltransferase N</fullName>
    </alternativeName>
    <alternativeName>
        <fullName evidence="1">tRNA (adenine(37)-C(2))-methyltransferase</fullName>
    </alternativeName>
    <alternativeName>
        <fullName evidence="1">tRNA m2A37 methyltransferase</fullName>
    </alternativeName>
</protein>
<gene>
    <name evidence="1" type="primary">rlmN</name>
    <name type="ordered locus">ACIAD0557</name>
</gene>
<comment type="function">
    <text evidence="1">Specifically methylates position 2 of adenine 2503 in 23S rRNA and position 2 of adenine 37 in tRNAs. m2A2503 modification seems to play a crucial role in the proofreading step occurring at the peptidyl transferase center and thus would serve to optimize ribosomal fidelity.</text>
</comment>
<comment type="catalytic activity">
    <reaction evidence="1">
        <text>adenosine(2503) in 23S rRNA + 2 reduced [2Fe-2S]-[ferredoxin] + 2 S-adenosyl-L-methionine = 2-methyladenosine(2503) in 23S rRNA + 5'-deoxyadenosine + L-methionine + 2 oxidized [2Fe-2S]-[ferredoxin] + S-adenosyl-L-homocysteine</text>
        <dbReference type="Rhea" id="RHEA:42916"/>
        <dbReference type="Rhea" id="RHEA-COMP:10000"/>
        <dbReference type="Rhea" id="RHEA-COMP:10001"/>
        <dbReference type="Rhea" id="RHEA-COMP:10152"/>
        <dbReference type="Rhea" id="RHEA-COMP:10282"/>
        <dbReference type="ChEBI" id="CHEBI:17319"/>
        <dbReference type="ChEBI" id="CHEBI:33737"/>
        <dbReference type="ChEBI" id="CHEBI:33738"/>
        <dbReference type="ChEBI" id="CHEBI:57844"/>
        <dbReference type="ChEBI" id="CHEBI:57856"/>
        <dbReference type="ChEBI" id="CHEBI:59789"/>
        <dbReference type="ChEBI" id="CHEBI:74411"/>
        <dbReference type="ChEBI" id="CHEBI:74497"/>
        <dbReference type="EC" id="2.1.1.192"/>
    </reaction>
</comment>
<comment type="catalytic activity">
    <reaction evidence="1">
        <text>adenosine(37) in tRNA + 2 reduced [2Fe-2S]-[ferredoxin] + 2 S-adenosyl-L-methionine = 2-methyladenosine(37) in tRNA + 5'-deoxyadenosine + L-methionine + 2 oxidized [2Fe-2S]-[ferredoxin] + S-adenosyl-L-homocysteine</text>
        <dbReference type="Rhea" id="RHEA:43332"/>
        <dbReference type="Rhea" id="RHEA-COMP:10000"/>
        <dbReference type="Rhea" id="RHEA-COMP:10001"/>
        <dbReference type="Rhea" id="RHEA-COMP:10162"/>
        <dbReference type="Rhea" id="RHEA-COMP:10485"/>
        <dbReference type="ChEBI" id="CHEBI:17319"/>
        <dbReference type="ChEBI" id="CHEBI:33737"/>
        <dbReference type="ChEBI" id="CHEBI:33738"/>
        <dbReference type="ChEBI" id="CHEBI:57844"/>
        <dbReference type="ChEBI" id="CHEBI:57856"/>
        <dbReference type="ChEBI" id="CHEBI:59789"/>
        <dbReference type="ChEBI" id="CHEBI:74411"/>
        <dbReference type="ChEBI" id="CHEBI:74497"/>
        <dbReference type="EC" id="2.1.1.192"/>
    </reaction>
</comment>
<comment type="cofactor">
    <cofactor evidence="1">
        <name>[4Fe-4S] cluster</name>
        <dbReference type="ChEBI" id="CHEBI:49883"/>
    </cofactor>
    <text evidence="1">Binds 1 [4Fe-4S] cluster. The cluster is coordinated with 3 cysteines and an exchangeable S-adenosyl-L-methionine.</text>
</comment>
<comment type="subcellular location">
    <subcellularLocation>
        <location evidence="1">Cytoplasm</location>
    </subcellularLocation>
</comment>
<comment type="miscellaneous">
    <text evidence="1">Reaction proceeds by a ping-pong mechanism involving intermediate methylation of a conserved cysteine residue.</text>
</comment>
<comment type="similarity">
    <text evidence="1">Belongs to the radical SAM superfamily. RlmN family.</text>
</comment>
<organism>
    <name type="scientific">Acinetobacter baylyi (strain ATCC 33305 / BD413 / ADP1)</name>
    <dbReference type="NCBI Taxonomy" id="62977"/>
    <lineage>
        <taxon>Bacteria</taxon>
        <taxon>Pseudomonadati</taxon>
        <taxon>Pseudomonadota</taxon>
        <taxon>Gammaproteobacteria</taxon>
        <taxon>Moraxellales</taxon>
        <taxon>Moraxellaceae</taxon>
        <taxon>Acinetobacter</taxon>
    </lineage>
</organism>
<dbReference type="EC" id="2.1.1.192" evidence="1"/>
<dbReference type="EMBL" id="CR543861">
    <property type="protein sequence ID" value="CAG67482.1"/>
    <property type="molecule type" value="Genomic_DNA"/>
</dbReference>
<dbReference type="RefSeq" id="WP_004920007.1">
    <property type="nucleotide sequence ID" value="NC_005966.1"/>
</dbReference>
<dbReference type="SMR" id="Q6FEM6"/>
<dbReference type="STRING" id="202950.GCA_001485005_00794"/>
<dbReference type="GeneID" id="45233035"/>
<dbReference type="KEGG" id="aci:ACIAD0557"/>
<dbReference type="eggNOG" id="COG0820">
    <property type="taxonomic scope" value="Bacteria"/>
</dbReference>
<dbReference type="HOGENOM" id="CLU_029101_0_0_6"/>
<dbReference type="OrthoDB" id="9793973at2"/>
<dbReference type="BioCyc" id="ASP62977:ACIAD_RS02535-MONOMER"/>
<dbReference type="Proteomes" id="UP000000430">
    <property type="component" value="Chromosome"/>
</dbReference>
<dbReference type="GO" id="GO:0005737">
    <property type="term" value="C:cytoplasm"/>
    <property type="evidence" value="ECO:0007669"/>
    <property type="project" value="UniProtKB-SubCell"/>
</dbReference>
<dbReference type="GO" id="GO:0051539">
    <property type="term" value="F:4 iron, 4 sulfur cluster binding"/>
    <property type="evidence" value="ECO:0007669"/>
    <property type="project" value="UniProtKB-UniRule"/>
</dbReference>
<dbReference type="GO" id="GO:0046872">
    <property type="term" value="F:metal ion binding"/>
    <property type="evidence" value="ECO:0007669"/>
    <property type="project" value="UniProtKB-KW"/>
</dbReference>
<dbReference type="GO" id="GO:0070040">
    <property type="term" value="F:rRNA (adenine(2503)-C2-)-methyltransferase activity"/>
    <property type="evidence" value="ECO:0007669"/>
    <property type="project" value="UniProtKB-UniRule"/>
</dbReference>
<dbReference type="GO" id="GO:0019843">
    <property type="term" value="F:rRNA binding"/>
    <property type="evidence" value="ECO:0007669"/>
    <property type="project" value="UniProtKB-UniRule"/>
</dbReference>
<dbReference type="GO" id="GO:0002935">
    <property type="term" value="F:tRNA (adenine(37)-C2)-methyltransferase activity"/>
    <property type="evidence" value="ECO:0007669"/>
    <property type="project" value="UniProtKB-UniRule"/>
</dbReference>
<dbReference type="GO" id="GO:0000049">
    <property type="term" value="F:tRNA binding"/>
    <property type="evidence" value="ECO:0007669"/>
    <property type="project" value="UniProtKB-UniRule"/>
</dbReference>
<dbReference type="GO" id="GO:0070475">
    <property type="term" value="P:rRNA base methylation"/>
    <property type="evidence" value="ECO:0007669"/>
    <property type="project" value="UniProtKB-UniRule"/>
</dbReference>
<dbReference type="GO" id="GO:0030488">
    <property type="term" value="P:tRNA methylation"/>
    <property type="evidence" value="ECO:0007669"/>
    <property type="project" value="UniProtKB-UniRule"/>
</dbReference>
<dbReference type="CDD" id="cd01335">
    <property type="entry name" value="Radical_SAM"/>
    <property type="match status" value="1"/>
</dbReference>
<dbReference type="FunFam" id="1.10.150.530:FF:000003">
    <property type="entry name" value="Dual-specificity RNA methyltransferase RlmN"/>
    <property type="match status" value="1"/>
</dbReference>
<dbReference type="FunFam" id="3.20.20.70:FF:000008">
    <property type="entry name" value="Dual-specificity RNA methyltransferase RlmN"/>
    <property type="match status" value="1"/>
</dbReference>
<dbReference type="Gene3D" id="1.10.150.530">
    <property type="match status" value="1"/>
</dbReference>
<dbReference type="Gene3D" id="3.20.20.70">
    <property type="entry name" value="Aldolase class I"/>
    <property type="match status" value="1"/>
</dbReference>
<dbReference type="HAMAP" id="MF_01849">
    <property type="entry name" value="RNA_methyltr_RlmN"/>
    <property type="match status" value="1"/>
</dbReference>
<dbReference type="InterPro" id="IPR013785">
    <property type="entry name" value="Aldolase_TIM"/>
</dbReference>
<dbReference type="InterPro" id="IPR040072">
    <property type="entry name" value="Methyltransferase_A"/>
</dbReference>
<dbReference type="InterPro" id="IPR048641">
    <property type="entry name" value="RlmN_N"/>
</dbReference>
<dbReference type="InterPro" id="IPR027492">
    <property type="entry name" value="RNA_MTrfase_RlmN"/>
</dbReference>
<dbReference type="InterPro" id="IPR004383">
    <property type="entry name" value="rRNA_lsu_MTrfase_RlmN/Cfr"/>
</dbReference>
<dbReference type="InterPro" id="IPR007197">
    <property type="entry name" value="rSAM"/>
</dbReference>
<dbReference type="NCBIfam" id="TIGR00048">
    <property type="entry name" value="rRNA_mod_RlmN"/>
    <property type="match status" value="1"/>
</dbReference>
<dbReference type="PANTHER" id="PTHR30544">
    <property type="entry name" value="23S RRNA METHYLTRANSFERASE"/>
    <property type="match status" value="1"/>
</dbReference>
<dbReference type="PANTHER" id="PTHR30544:SF5">
    <property type="entry name" value="RADICAL SAM CORE DOMAIN-CONTAINING PROTEIN"/>
    <property type="match status" value="1"/>
</dbReference>
<dbReference type="Pfam" id="PF04055">
    <property type="entry name" value="Radical_SAM"/>
    <property type="match status" value="1"/>
</dbReference>
<dbReference type="Pfam" id="PF21016">
    <property type="entry name" value="RlmN_N"/>
    <property type="match status" value="1"/>
</dbReference>
<dbReference type="PIRSF" id="PIRSF006004">
    <property type="entry name" value="CHP00048"/>
    <property type="match status" value="1"/>
</dbReference>
<dbReference type="SFLD" id="SFLDF00275">
    <property type="entry name" value="adenosine_C2_methyltransferase"/>
    <property type="match status" value="1"/>
</dbReference>
<dbReference type="SFLD" id="SFLDG01062">
    <property type="entry name" value="methyltransferase_(Class_A)"/>
    <property type="match status" value="1"/>
</dbReference>
<dbReference type="SUPFAM" id="SSF102114">
    <property type="entry name" value="Radical SAM enzymes"/>
    <property type="match status" value="1"/>
</dbReference>
<dbReference type="PROSITE" id="PS51918">
    <property type="entry name" value="RADICAL_SAM"/>
    <property type="match status" value="1"/>
</dbReference>
<keyword id="KW-0004">4Fe-4S</keyword>
<keyword id="KW-0963">Cytoplasm</keyword>
<keyword id="KW-1015">Disulfide bond</keyword>
<keyword id="KW-0408">Iron</keyword>
<keyword id="KW-0411">Iron-sulfur</keyword>
<keyword id="KW-0479">Metal-binding</keyword>
<keyword id="KW-0489">Methyltransferase</keyword>
<keyword id="KW-0698">rRNA processing</keyword>
<keyword id="KW-0949">S-adenosyl-L-methionine</keyword>
<keyword id="KW-0808">Transferase</keyword>
<keyword id="KW-0819">tRNA processing</keyword>
<reference key="1">
    <citation type="journal article" date="2004" name="Nucleic Acids Res.">
        <title>Unique features revealed by the genome sequence of Acinetobacter sp. ADP1, a versatile and naturally transformation competent bacterium.</title>
        <authorList>
            <person name="Barbe V."/>
            <person name="Vallenet D."/>
            <person name="Fonknechten N."/>
            <person name="Kreimeyer A."/>
            <person name="Oztas S."/>
            <person name="Labarre L."/>
            <person name="Cruveiller S."/>
            <person name="Robert C."/>
            <person name="Duprat S."/>
            <person name="Wincker P."/>
            <person name="Ornston L.N."/>
            <person name="Weissenbach J."/>
            <person name="Marliere P."/>
            <person name="Cohen G.N."/>
            <person name="Medigue C."/>
        </authorList>
    </citation>
    <scope>NUCLEOTIDE SEQUENCE [LARGE SCALE GENOMIC DNA]</scope>
    <source>
        <strain>ATCC 33305 / BD413 / ADP1</strain>
    </source>
</reference>
<proteinExistence type="inferred from homology"/>
<evidence type="ECO:0000255" key="1">
    <source>
        <dbReference type="HAMAP-Rule" id="MF_01849"/>
    </source>
</evidence>
<evidence type="ECO:0000255" key="2">
    <source>
        <dbReference type="PROSITE-ProRule" id="PRU01266"/>
    </source>
</evidence>
<evidence type="ECO:0000256" key="3">
    <source>
        <dbReference type="SAM" id="MobiDB-lite"/>
    </source>
</evidence>
<accession>Q6FEM6</accession>
<feature type="chain" id="PRO_0000350000" description="Dual-specificity RNA methyltransferase RlmN">
    <location>
        <begin position="1"/>
        <end position="414"/>
    </location>
</feature>
<feature type="domain" description="Radical SAM core" evidence="2">
    <location>
        <begin position="134"/>
        <end position="377"/>
    </location>
</feature>
<feature type="region of interest" description="Disordered" evidence="3">
    <location>
        <begin position="1"/>
        <end position="22"/>
    </location>
</feature>
<feature type="compositionally biased region" description="Polar residues" evidence="3">
    <location>
        <begin position="1"/>
        <end position="13"/>
    </location>
</feature>
<feature type="active site" description="Proton acceptor" evidence="1">
    <location>
        <position position="124"/>
    </location>
</feature>
<feature type="active site" description="S-methylcysteine intermediate" evidence="1">
    <location>
        <position position="382"/>
    </location>
</feature>
<feature type="binding site" evidence="1">
    <location>
        <position position="148"/>
    </location>
    <ligand>
        <name>[4Fe-4S] cluster</name>
        <dbReference type="ChEBI" id="CHEBI:49883"/>
        <note>4Fe-4S-S-AdoMet</note>
    </ligand>
</feature>
<feature type="binding site" evidence="1">
    <location>
        <position position="152"/>
    </location>
    <ligand>
        <name>[4Fe-4S] cluster</name>
        <dbReference type="ChEBI" id="CHEBI:49883"/>
        <note>4Fe-4S-S-AdoMet</note>
    </ligand>
</feature>
<feature type="binding site" evidence="1">
    <location>
        <position position="155"/>
    </location>
    <ligand>
        <name>[4Fe-4S] cluster</name>
        <dbReference type="ChEBI" id="CHEBI:49883"/>
        <note>4Fe-4S-S-AdoMet</note>
    </ligand>
</feature>
<feature type="binding site" evidence="1">
    <location>
        <begin position="204"/>
        <end position="205"/>
    </location>
    <ligand>
        <name>S-adenosyl-L-methionine</name>
        <dbReference type="ChEBI" id="CHEBI:59789"/>
    </ligand>
</feature>
<feature type="binding site" evidence="1">
    <location>
        <position position="236"/>
    </location>
    <ligand>
        <name>S-adenosyl-L-methionine</name>
        <dbReference type="ChEBI" id="CHEBI:59789"/>
    </ligand>
</feature>
<feature type="binding site" evidence="1">
    <location>
        <begin position="258"/>
        <end position="260"/>
    </location>
    <ligand>
        <name>S-adenosyl-L-methionine</name>
        <dbReference type="ChEBI" id="CHEBI:59789"/>
    </ligand>
</feature>
<feature type="binding site" evidence="1">
    <location>
        <position position="339"/>
    </location>
    <ligand>
        <name>S-adenosyl-L-methionine</name>
        <dbReference type="ChEBI" id="CHEBI:59789"/>
    </ligand>
</feature>
<feature type="disulfide bond" description="(transient)" evidence="1">
    <location>
        <begin position="141"/>
        <end position="382"/>
    </location>
</feature>
<name>RLMN_ACIAD</name>